<feature type="chain" id="PRO_0000360734" description="Uncharacterized protein YdbC">
    <location>
        <begin position="1"/>
        <end position="119"/>
    </location>
</feature>
<protein>
    <recommendedName>
        <fullName>Uncharacterized protein YdbC</fullName>
    </recommendedName>
</protein>
<dbReference type="EMBL" id="AB001488">
    <property type="protein sequence ID" value="BAA19279.1"/>
    <property type="molecule type" value="Genomic_DNA"/>
</dbReference>
<dbReference type="EMBL" id="AL009126">
    <property type="protein sequence ID" value="CAB12249.1"/>
    <property type="molecule type" value="Genomic_DNA"/>
</dbReference>
<dbReference type="PIR" id="F69770">
    <property type="entry name" value="F69770"/>
</dbReference>
<dbReference type="RefSeq" id="NP_388323.1">
    <property type="nucleotide sequence ID" value="NC_000964.3"/>
</dbReference>
<dbReference type="RefSeq" id="WP_003246730.1">
    <property type="nucleotide sequence ID" value="NZ_OZ025638.1"/>
</dbReference>
<dbReference type="SMR" id="P96598"/>
<dbReference type="FunCoup" id="P96598">
    <property type="interactions" value="18"/>
</dbReference>
<dbReference type="STRING" id="224308.BSU04420"/>
<dbReference type="PaxDb" id="224308-BSU04420"/>
<dbReference type="EnsemblBacteria" id="CAB12249">
    <property type="protein sequence ID" value="CAB12249"/>
    <property type="gene ID" value="BSU_04420"/>
</dbReference>
<dbReference type="GeneID" id="938234"/>
<dbReference type="KEGG" id="bsu:BSU04420"/>
<dbReference type="PATRIC" id="fig|224308.179.peg.468"/>
<dbReference type="eggNOG" id="COG2329">
    <property type="taxonomic scope" value="Bacteria"/>
</dbReference>
<dbReference type="InParanoid" id="P96598"/>
<dbReference type="OrthoDB" id="2627153at2"/>
<dbReference type="BioCyc" id="BSUB:BSU04420-MONOMER"/>
<dbReference type="Proteomes" id="UP000001570">
    <property type="component" value="Chromosome"/>
</dbReference>
<dbReference type="InterPro" id="IPR011008">
    <property type="entry name" value="Dimeric_a/b-barrel"/>
</dbReference>
<dbReference type="InterPro" id="IPR032555">
    <property type="entry name" value="DUF4937"/>
</dbReference>
<dbReference type="Pfam" id="PF16291">
    <property type="entry name" value="DUF4937"/>
    <property type="match status" value="1"/>
</dbReference>
<dbReference type="SUPFAM" id="SSF54909">
    <property type="entry name" value="Dimeric alpha+beta barrel"/>
    <property type="match status" value="1"/>
</dbReference>
<gene>
    <name type="primary">ydbC</name>
    <name type="ordered locus">BSU04420</name>
</gene>
<organism>
    <name type="scientific">Bacillus subtilis (strain 168)</name>
    <dbReference type="NCBI Taxonomy" id="224308"/>
    <lineage>
        <taxon>Bacteria</taxon>
        <taxon>Bacillati</taxon>
        <taxon>Bacillota</taxon>
        <taxon>Bacilli</taxon>
        <taxon>Bacillales</taxon>
        <taxon>Bacillaceae</taxon>
        <taxon>Bacillus</taxon>
    </lineage>
</organism>
<accession>P96598</accession>
<accession>Q797L7</accession>
<sequence length="119" mass="13805">MLIKKMICEVDAANAEAFAKAQSQWEALSHISGFIKQAGGWRKTIDEPLTAEIISVWENREAYDHFMENEHDSIYEENDQKAVILSIEVTVYEEDKPFVHDLLHNPDIRYEPNWTVLKA</sequence>
<name>YDBC_BACSU</name>
<keyword id="KW-1185">Reference proteome</keyword>
<proteinExistence type="predicted"/>
<reference key="1">
    <citation type="submission" date="1997-03" db="EMBL/GenBank/DDBJ databases">
        <title>A 148 kbp sequence of the region between 35 and 47 degree of the Bacillus subtilis genome.</title>
        <authorList>
            <person name="Kasahara Y."/>
            <person name="Nakai S."/>
            <person name="Lee S."/>
            <person name="Sadaie Y."/>
            <person name="Ogasawara N."/>
        </authorList>
    </citation>
    <scope>NUCLEOTIDE SEQUENCE [GENOMIC DNA]</scope>
    <source>
        <strain>168</strain>
    </source>
</reference>
<reference key="2">
    <citation type="journal article" date="1997" name="Nature">
        <title>The complete genome sequence of the Gram-positive bacterium Bacillus subtilis.</title>
        <authorList>
            <person name="Kunst F."/>
            <person name="Ogasawara N."/>
            <person name="Moszer I."/>
            <person name="Albertini A.M."/>
            <person name="Alloni G."/>
            <person name="Azevedo V."/>
            <person name="Bertero M.G."/>
            <person name="Bessieres P."/>
            <person name="Bolotin A."/>
            <person name="Borchert S."/>
            <person name="Borriss R."/>
            <person name="Boursier L."/>
            <person name="Brans A."/>
            <person name="Braun M."/>
            <person name="Brignell S.C."/>
            <person name="Bron S."/>
            <person name="Brouillet S."/>
            <person name="Bruschi C.V."/>
            <person name="Caldwell B."/>
            <person name="Capuano V."/>
            <person name="Carter N.M."/>
            <person name="Choi S.-K."/>
            <person name="Codani J.-J."/>
            <person name="Connerton I.F."/>
            <person name="Cummings N.J."/>
            <person name="Daniel R.A."/>
            <person name="Denizot F."/>
            <person name="Devine K.M."/>
            <person name="Duesterhoeft A."/>
            <person name="Ehrlich S.D."/>
            <person name="Emmerson P.T."/>
            <person name="Entian K.-D."/>
            <person name="Errington J."/>
            <person name="Fabret C."/>
            <person name="Ferrari E."/>
            <person name="Foulger D."/>
            <person name="Fritz C."/>
            <person name="Fujita M."/>
            <person name="Fujita Y."/>
            <person name="Fuma S."/>
            <person name="Galizzi A."/>
            <person name="Galleron N."/>
            <person name="Ghim S.-Y."/>
            <person name="Glaser P."/>
            <person name="Goffeau A."/>
            <person name="Golightly E.J."/>
            <person name="Grandi G."/>
            <person name="Guiseppi G."/>
            <person name="Guy B.J."/>
            <person name="Haga K."/>
            <person name="Haiech J."/>
            <person name="Harwood C.R."/>
            <person name="Henaut A."/>
            <person name="Hilbert H."/>
            <person name="Holsappel S."/>
            <person name="Hosono S."/>
            <person name="Hullo M.-F."/>
            <person name="Itaya M."/>
            <person name="Jones L.-M."/>
            <person name="Joris B."/>
            <person name="Karamata D."/>
            <person name="Kasahara Y."/>
            <person name="Klaerr-Blanchard M."/>
            <person name="Klein C."/>
            <person name="Kobayashi Y."/>
            <person name="Koetter P."/>
            <person name="Koningstein G."/>
            <person name="Krogh S."/>
            <person name="Kumano M."/>
            <person name="Kurita K."/>
            <person name="Lapidus A."/>
            <person name="Lardinois S."/>
            <person name="Lauber J."/>
            <person name="Lazarevic V."/>
            <person name="Lee S.-M."/>
            <person name="Levine A."/>
            <person name="Liu H."/>
            <person name="Masuda S."/>
            <person name="Mauel C."/>
            <person name="Medigue C."/>
            <person name="Medina N."/>
            <person name="Mellado R.P."/>
            <person name="Mizuno M."/>
            <person name="Moestl D."/>
            <person name="Nakai S."/>
            <person name="Noback M."/>
            <person name="Noone D."/>
            <person name="O'Reilly M."/>
            <person name="Ogawa K."/>
            <person name="Ogiwara A."/>
            <person name="Oudega B."/>
            <person name="Park S.-H."/>
            <person name="Parro V."/>
            <person name="Pohl T.M."/>
            <person name="Portetelle D."/>
            <person name="Porwollik S."/>
            <person name="Prescott A.M."/>
            <person name="Presecan E."/>
            <person name="Pujic P."/>
            <person name="Purnelle B."/>
            <person name="Rapoport G."/>
            <person name="Rey M."/>
            <person name="Reynolds S."/>
            <person name="Rieger M."/>
            <person name="Rivolta C."/>
            <person name="Rocha E."/>
            <person name="Roche B."/>
            <person name="Rose M."/>
            <person name="Sadaie Y."/>
            <person name="Sato T."/>
            <person name="Scanlan E."/>
            <person name="Schleich S."/>
            <person name="Schroeter R."/>
            <person name="Scoffone F."/>
            <person name="Sekiguchi J."/>
            <person name="Sekowska A."/>
            <person name="Seror S.J."/>
            <person name="Serror P."/>
            <person name="Shin B.-S."/>
            <person name="Soldo B."/>
            <person name="Sorokin A."/>
            <person name="Tacconi E."/>
            <person name="Takagi T."/>
            <person name="Takahashi H."/>
            <person name="Takemaru K."/>
            <person name="Takeuchi M."/>
            <person name="Tamakoshi A."/>
            <person name="Tanaka T."/>
            <person name="Terpstra P."/>
            <person name="Tognoni A."/>
            <person name="Tosato V."/>
            <person name="Uchiyama S."/>
            <person name="Vandenbol M."/>
            <person name="Vannier F."/>
            <person name="Vassarotti A."/>
            <person name="Viari A."/>
            <person name="Wambutt R."/>
            <person name="Wedler E."/>
            <person name="Wedler H."/>
            <person name="Weitzenegger T."/>
            <person name="Winters P."/>
            <person name="Wipat A."/>
            <person name="Yamamoto H."/>
            <person name="Yamane K."/>
            <person name="Yasumoto K."/>
            <person name="Yata K."/>
            <person name="Yoshida K."/>
            <person name="Yoshikawa H.-F."/>
            <person name="Zumstein E."/>
            <person name="Yoshikawa H."/>
            <person name="Danchin A."/>
        </authorList>
    </citation>
    <scope>NUCLEOTIDE SEQUENCE [LARGE SCALE GENOMIC DNA]</scope>
    <source>
        <strain>168</strain>
    </source>
</reference>